<name>CLPP_PSEP1</name>
<evidence type="ECO:0000255" key="1">
    <source>
        <dbReference type="HAMAP-Rule" id="MF_00444"/>
    </source>
</evidence>
<protein>
    <recommendedName>
        <fullName evidence="1">ATP-dependent Clp protease proteolytic subunit</fullName>
        <ecNumber evidence="1">3.4.21.92</ecNumber>
    </recommendedName>
    <alternativeName>
        <fullName evidence="1">Endopeptidase Clp</fullName>
    </alternativeName>
</protein>
<proteinExistence type="inferred from homology"/>
<keyword id="KW-0963">Cytoplasm</keyword>
<keyword id="KW-0378">Hydrolase</keyword>
<keyword id="KW-0645">Protease</keyword>
<keyword id="KW-0720">Serine protease</keyword>
<comment type="function">
    <text evidence="1">Cleaves peptides in various proteins in a process that requires ATP hydrolysis. Has a chymotrypsin-like activity. Plays a major role in the degradation of misfolded proteins.</text>
</comment>
<comment type="catalytic activity">
    <reaction evidence="1">
        <text>Hydrolysis of proteins to small peptides in the presence of ATP and magnesium. alpha-casein is the usual test substrate. In the absence of ATP, only oligopeptides shorter than five residues are hydrolyzed (such as succinyl-Leu-Tyr-|-NHMec, and Leu-Tyr-Leu-|-Tyr-Trp, in which cleavage of the -Tyr-|-Leu- and -Tyr-|-Trp bonds also occurs).</text>
        <dbReference type="EC" id="3.4.21.92"/>
    </reaction>
</comment>
<comment type="subunit">
    <text evidence="1">Fourteen ClpP subunits assemble into 2 heptameric rings which stack back to back to give a disk-like structure with a central cavity, resembling the structure of eukaryotic proteasomes.</text>
</comment>
<comment type="subcellular location">
    <subcellularLocation>
        <location evidence="1">Cytoplasm</location>
    </subcellularLocation>
</comment>
<comment type="similarity">
    <text evidence="1">Belongs to the peptidase S14 family.</text>
</comment>
<reference key="1">
    <citation type="submission" date="2007-05" db="EMBL/GenBank/DDBJ databases">
        <title>Complete sequence of Pseudomonas putida F1.</title>
        <authorList>
            <consortium name="US DOE Joint Genome Institute"/>
            <person name="Copeland A."/>
            <person name="Lucas S."/>
            <person name="Lapidus A."/>
            <person name="Barry K."/>
            <person name="Detter J.C."/>
            <person name="Glavina del Rio T."/>
            <person name="Hammon N."/>
            <person name="Israni S."/>
            <person name="Dalin E."/>
            <person name="Tice H."/>
            <person name="Pitluck S."/>
            <person name="Chain P."/>
            <person name="Malfatti S."/>
            <person name="Shin M."/>
            <person name="Vergez L."/>
            <person name="Schmutz J."/>
            <person name="Larimer F."/>
            <person name="Land M."/>
            <person name="Hauser L."/>
            <person name="Kyrpides N."/>
            <person name="Lykidis A."/>
            <person name="Parales R."/>
            <person name="Richardson P."/>
        </authorList>
    </citation>
    <scope>NUCLEOTIDE SEQUENCE [LARGE SCALE GENOMIC DNA]</scope>
    <source>
        <strain>ATCC 700007 / DSM 6899 / JCM 31910 / BCRC 17059 / LMG 24140 / F1</strain>
    </source>
</reference>
<organism>
    <name type="scientific">Pseudomonas putida (strain ATCC 700007 / DSM 6899 / JCM 31910 / BCRC 17059 / LMG 24140 / F1)</name>
    <dbReference type="NCBI Taxonomy" id="351746"/>
    <lineage>
        <taxon>Bacteria</taxon>
        <taxon>Pseudomonadati</taxon>
        <taxon>Pseudomonadota</taxon>
        <taxon>Gammaproteobacteria</taxon>
        <taxon>Pseudomonadales</taxon>
        <taxon>Pseudomonadaceae</taxon>
        <taxon>Pseudomonas</taxon>
    </lineage>
</organism>
<accession>A5W635</accession>
<dbReference type="EC" id="3.4.21.92" evidence="1"/>
<dbReference type="EMBL" id="CP000712">
    <property type="protein sequence ID" value="ABQ79595.1"/>
    <property type="molecule type" value="Genomic_DNA"/>
</dbReference>
<dbReference type="SMR" id="A5W635"/>
<dbReference type="MEROPS" id="S14.001"/>
<dbReference type="KEGG" id="ppf:Pput_3469"/>
<dbReference type="eggNOG" id="COG0740">
    <property type="taxonomic scope" value="Bacteria"/>
</dbReference>
<dbReference type="HOGENOM" id="CLU_058707_3_2_6"/>
<dbReference type="GO" id="GO:0005737">
    <property type="term" value="C:cytoplasm"/>
    <property type="evidence" value="ECO:0007669"/>
    <property type="project" value="UniProtKB-SubCell"/>
</dbReference>
<dbReference type="GO" id="GO:0009368">
    <property type="term" value="C:endopeptidase Clp complex"/>
    <property type="evidence" value="ECO:0007669"/>
    <property type="project" value="TreeGrafter"/>
</dbReference>
<dbReference type="GO" id="GO:0004176">
    <property type="term" value="F:ATP-dependent peptidase activity"/>
    <property type="evidence" value="ECO:0007669"/>
    <property type="project" value="InterPro"/>
</dbReference>
<dbReference type="GO" id="GO:0051117">
    <property type="term" value="F:ATPase binding"/>
    <property type="evidence" value="ECO:0007669"/>
    <property type="project" value="TreeGrafter"/>
</dbReference>
<dbReference type="GO" id="GO:0004252">
    <property type="term" value="F:serine-type endopeptidase activity"/>
    <property type="evidence" value="ECO:0007669"/>
    <property type="project" value="UniProtKB-UniRule"/>
</dbReference>
<dbReference type="GO" id="GO:0006515">
    <property type="term" value="P:protein quality control for misfolded or incompletely synthesized proteins"/>
    <property type="evidence" value="ECO:0007669"/>
    <property type="project" value="TreeGrafter"/>
</dbReference>
<dbReference type="CDD" id="cd07017">
    <property type="entry name" value="S14_ClpP_2"/>
    <property type="match status" value="1"/>
</dbReference>
<dbReference type="FunFam" id="3.90.226.10:FF:000001">
    <property type="entry name" value="ATP-dependent Clp protease proteolytic subunit"/>
    <property type="match status" value="1"/>
</dbReference>
<dbReference type="Gene3D" id="3.90.226.10">
    <property type="entry name" value="2-enoyl-CoA Hydratase, Chain A, domain 1"/>
    <property type="match status" value="1"/>
</dbReference>
<dbReference type="HAMAP" id="MF_00444">
    <property type="entry name" value="ClpP"/>
    <property type="match status" value="1"/>
</dbReference>
<dbReference type="InterPro" id="IPR001907">
    <property type="entry name" value="ClpP"/>
</dbReference>
<dbReference type="InterPro" id="IPR029045">
    <property type="entry name" value="ClpP/crotonase-like_dom_sf"/>
</dbReference>
<dbReference type="InterPro" id="IPR023562">
    <property type="entry name" value="ClpP/TepA"/>
</dbReference>
<dbReference type="InterPro" id="IPR033135">
    <property type="entry name" value="ClpP_His_AS"/>
</dbReference>
<dbReference type="InterPro" id="IPR018215">
    <property type="entry name" value="ClpP_Ser_AS"/>
</dbReference>
<dbReference type="NCBIfam" id="TIGR00493">
    <property type="entry name" value="clpP"/>
    <property type="match status" value="1"/>
</dbReference>
<dbReference type="NCBIfam" id="NF001368">
    <property type="entry name" value="PRK00277.1"/>
    <property type="match status" value="1"/>
</dbReference>
<dbReference type="NCBIfam" id="NF009205">
    <property type="entry name" value="PRK12553.1"/>
    <property type="match status" value="1"/>
</dbReference>
<dbReference type="PANTHER" id="PTHR10381">
    <property type="entry name" value="ATP-DEPENDENT CLP PROTEASE PROTEOLYTIC SUBUNIT"/>
    <property type="match status" value="1"/>
</dbReference>
<dbReference type="PANTHER" id="PTHR10381:SF70">
    <property type="entry name" value="ATP-DEPENDENT CLP PROTEASE PROTEOLYTIC SUBUNIT"/>
    <property type="match status" value="1"/>
</dbReference>
<dbReference type="Pfam" id="PF00574">
    <property type="entry name" value="CLP_protease"/>
    <property type="match status" value="1"/>
</dbReference>
<dbReference type="PRINTS" id="PR00127">
    <property type="entry name" value="CLPPROTEASEP"/>
</dbReference>
<dbReference type="SUPFAM" id="SSF52096">
    <property type="entry name" value="ClpP/crotonase"/>
    <property type="match status" value="1"/>
</dbReference>
<dbReference type="PROSITE" id="PS00382">
    <property type="entry name" value="CLP_PROTEASE_HIS"/>
    <property type="match status" value="1"/>
</dbReference>
<dbReference type="PROSITE" id="PS00381">
    <property type="entry name" value="CLP_PROTEASE_SER"/>
    <property type="match status" value="1"/>
</dbReference>
<feature type="chain" id="PRO_1000026115" description="ATP-dependent Clp protease proteolytic subunit">
    <location>
        <begin position="1"/>
        <end position="213"/>
    </location>
</feature>
<feature type="active site" description="Nucleophile" evidence="1">
    <location>
        <position position="114"/>
    </location>
</feature>
<feature type="active site" evidence="1">
    <location>
        <position position="139"/>
    </location>
</feature>
<gene>
    <name evidence="1" type="primary">clpP</name>
    <name type="ordered locus">Pput_3469</name>
</gene>
<sequence>MSRNSYIQQSSDIQAAGGLVPMVIEQSARGERAYDIYSRLLKERVIFLVGPVEDYMANLVVAQLLFLEAENPDKDIHLYINSPGGSVTAGMSIYDTMQFIKPDVSTICIGQACSMGAFLLAAGAKGKRHCLPNSRVMIHQPLGGFQGQATDIEIHAQEILNIKARLNELLAYHTGQDLETIKRDTERDNFMSASRAAEYGLIDSVYDKRQLAS</sequence>